<sequence>MSLNFLDFEKPIADLEAKIEGLRLVNQGGEFDISIEEEITKLREKSAEMSKKIFADLGAWQVSQLARHPMRPYTLDYIPRIFSEFDELAGDRAFADDKAIIGGLAMLDEQPIMVIGHQKGRDTKEKIKRNFGMPKPEGYRKALRLMEMAERFNLPIITFIDTPGAYPGVGAEERGQSEAIARNLKVMAGLKVPIICTVIGEGGSGGALAIGVGDRVNMLQYSTYSVISPEGCASILWKSADKAPLAAEAMGVAAGQIKELGLINSIVEEPLGGAHRDHDVAAANLKATIKQQLAQLKSLSVEELLDQRYERLMSFGYC</sequence>
<keyword id="KW-0067">ATP-binding</keyword>
<keyword id="KW-0963">Cytoplasm</keyword>
<keyword id="KW-0275">Fatty acid biosynthesis</keyword>
<keyword id="KW-0276">Fatty acid metabolism</keyword>
<keyword id="KW-0444">Lipid biosynthesis</keyword>
<keyword id="KW-0443">Lipid metabolism</keyword>
<keyword id="KW-0547">Nucleotide-binding</keyword>
<keyword id="KW-0808">Transferase</keyword>
<reference key="1">
    <citation type="submission" date="2006-06" db="EMBL/GenBank/DDBJ databases">
        <title>Complete sequence of Pseudoalteromonas atlantica T6c.</title>
        <authorList>
            <consortium name="US DOE Joint Genome Institute"/>
            <person name="Copeland A."/>
            <person name="Lucas S."/>
            <person name="Lapidus A."/>
            <person name="Barry K."/>
            <person name="Detter J.C."/>
            <person name="Glavina del Rio T."/>
            <person name="Hammon N."/>
            <person name="Israni S."/>
            <person name="Dalin E."/>
            <person name="Tice H."/>
            <person name="Pitluck S."/>
            <person name="Saunders E."/>
            <person name="Brettin T."/>
            <person name="Bruce D."/>
            <person name="Han C."/>
            <person name="Tapia R."/>
            <person name="Gilna P."/>
            <person name="Schmutz J."/>
            <person name="Larimer F."/>
            <person name="Land M."/>
            <person name="Hauser L."/>
            <person name="Kyrpides N."/>
            <person name="Kim E."/>
            <person name="Karls A.C."/>
            <person name="Bartlett D."/>
            <person name="Higgins B.P."/>
            <person name="Richardson P."/>
        </authorList>
    </citation>
    <scope>NUCLEOTIDE SEQUENCE [LARGE SCALE GENOMIC DNA]</scope>
    <source>
        <strain>T6c / ATCC BAA-1087</strain>
    </source>
</reference>
<feature type="chain" id="PRO_1000062654" description="Acetyl-coenzyme A carboxylase carboxyl transferase subunit alpha">
    <location>
        <begin position="1"/>
        <end position="318"/>
    </location>
</feature>
<feature type="domain" description="CoA carboxyltransferase C-terminal" evidence="2">
    <location>
        <begin position="34"/>
        <end position="295"/>
    </location>
</feature>
<gene>
    <name evidence="1" type="primary">accA</name>
    <name type="ordered locus">Patl_1265</name>
</gene>
<evidence type="ECO:0000255" key="1">
    <source>
        <dbReference type="HAMAP-Rule" id="MF_00823"/>
    </source>
</evidence>
<evidence type="ECO:0000255" key="2">
    <source>
        <dbReference type="PROSITE-ProRule" id="PRU01137"/>
    </source>
</evidence>
<protein>
    <recommendedName>
        <fullName evidence="1">Acetyl-coenzyme A carboxylase carboxyl transferase subunit alpha</fullName>
        <shortName evidence="1">ACCase subunit alpha</shortName>
        <shortName evidence="1">Acetyl-CoA carboxylase carboxyltransferase subunit alpha</shortName>
        <ecNumber evidence="1">2.1.3.15</ecNumber>
    </recommendedName>
</protein>
<accession>Q15WE7</accession>
<comment type="function">
    <text evidence="1">Component of the acetyl coenzyme A carboxylase (ACC) complex. First, biotin carboxylase catalyzes the carboxylation of biotin on its carrier protein (BCCP) and then the CO(2) group is transferred by the carboxyltransferase to acetyl-CoA to form malonyl-CoA.</text>
</comment>
<comment type="catalytic activity">
    <reaction evidence="1">
        <text>N(6)-carboxybiotinyl-L-lysyl-[protein] + acetyl-CoA = N(6)-biotinyl-L-lysyl-[protein] + malonyl-CoA</text>
        <dbReference type="Rhea" id="RHEA:54728"/>
        <dbReference type="Rhea" id="RHEA-COMP:10505"/>
        <dbReference type="Rhea" id="RHEA-COMP:10506"/>
        <dbReference type="ChEBI" id="CHEBI:57288"/>
        <dbReference type="ChEBI" id="CHEBI:57384"/>
        <dbReference type="ChEBI" id="CHEBI:83144"/>
        <dbReference type="ChEBI" id="CHEBI:83145"/>
        <dbReference type="EC" id="2.1.3.15"/>
    </reaction>
</comment>
<comment type="pathway">
    <text evidence="1">Lipid metabolism; malonyl-CoA biosynthesis; malonyl-CoA from acetyl-CoA: step 1/1.</text>
</comment>
<comment type="subunit">
    <text evidence="1">Acetyl-CoA carboxylase is a heterohexamer composed of biotin carboxyl carrier protein (AccB), biotin carboxylase (AccC) and two subunits each of ACCase subunit alpha (AccA) and ACCase subunit beta (AccD).</text>
</comment>
<comment type="subcellular location">
    <subcellularLocation>
        <location evidence="1">Cytoplasm</location>
    </subcellularLocation>
</comment>
<comment type="similarity">
    <text evidence="1">Belongs to the AccA family.</text>
</comment>
<name>ACCA_PSEA6</name>
<dbReference type="EC" id="2.1.3.15" evidence="1"/>
<dbReference type="EMBL" id="CP000388">
    <property type="protein sequence ID" value="ABG39791.1"/>
    <property type="molecule type" value="Genomic_DNA"/>
</dbReference>
<dbReference type="RefSeq" id="WP_006992121.1">
    <property type="nucleotide sequence ID" value="NC_008228.1"/>
</dbReference>
<dbReference type="SMR" id="Q15WE7"/>
<dbReference type="STRING" id="342610.Patl_1265"/>
<dbReference type="KEGG" id="pat:Patl_1265"/>
<dbReference type="eggNOG" id="COG0825">
    <property type="taxonomic scope" value="Bacteria"/>
</dbReference>
<dbReference type="HOGENOM" id="CLU_015486_0_2_6"/>
<dbReference type="OrthoDB" id="9808023at2"/>
<dbReference type="UniPathway" id="UPA00655">
    <property type="reaction ID" value="UER00711"/>
</dbReference>
<dbReference type="Proteomes" id="UP000001981">
    <property type="component" value="Chromosome"/>
</dbReference>
<dbReference type="GO" id="GO:0009317">
    <property type="term" value="C:acetyl-CoA carboxylase complex"/>
    <property type="evidence" value="ECO:0007669"/>
    <property type="project" value="InterPro"/>
</dbReference>
<dbReference type="GO" id="GO:0003989">
    <property type="term" value="F:acetyl-CoA carboxylase activity"/>
    <property type="evidence" value="ECO:0007669"/>
    <property type="project" value="InterPro"/>
</dbReference>
<dbReference type="GO" id="GO:0005524">
    <property type="term" value="F:ATP binding"/>
    <property type="evidence" value="ECO:0007669"/>
    <property type="project" value="UniProtKB-KW"/>
</dbReference>
<dbReference type="GO" id="GO:0016743">
    <property type="term" value="F:carboxyl- or carbamoyltransferase activity"/>
    <property type="evidence" value="ECO:0007669"/>
    <property type="project" value="UniProtKB-UniRule"/>
</dbReference>
<dbReference type="GO" id="GO:0006633">
    <property type="term" value="P:fatty acid biosynthetic process"/>
    <property type="evidence" value="ECO:0007669"/>
    <property type="project" value="UniProtKB-KW"/>
</dbReference>
<dbReference type="GO" id="GO:2001295">
    <property type="term" value="P:malonyl-CoA biosynthetic process"/>
    <property type="evidence" value="ECO:0007669"/>
    <property type="project" value="UniProtKB-UniRule"/>
</dbReference>
<dbReference type="FunFam" id="3.90.226.10:FF:000008">
    <property type="entry name" value="Acetyl-coenzyme A carboxylase carboxyl transferase subunit alpha"/>
    <property type="match status" value="1"/>
</dbReference>
<dbReference type="Gene3D" id="3.90.226.10">
    <property type="entry name" value="2-enoyl-CoA Hydratase, Chain A, domain 1"/>
    <property type="match status" value="1"/>
</dbReference>
<dbReference type="HAMAP" id="MF_00823">
    <property type="entry name" value="AcetylCoA_CT_alpha"/>
    <property type="match status" value="1"/>
</dbReference>
<dbReference type="InterPro" id="IPR001095">
    <property type="entry name" value="Acetyl_CoA_COase_a_su"/>
</dbReference>
<dbReference type="InterPro" id="IPR029045">
    <property type="entry name" value="ClpP/crotonase-like_dom_sf"/>
</dbReference>
<dbReference type="InterPro" id="IPR011763">
    <property type="entry name" value="COA_CT_C"/>
</dbReference>
<dbReference type="NCBIfam" id="TIGR00513">
    <property type="entry name" value="accA"/>
    <property type="match status" value="1"/>
</dbReference>
<dbReference type="NCBIfam" id="NF041504">
    <property type="entry name" value="AccA_sub"/>
    <property type="match status" value="1"/>
</dbReference>
<dbReference type="NCBIfam" id="NF004344">
    <property type="entry name" value="PRK05724.1"/>
    <property type="match status" value="1"/>
</dbReference>
<dbReference type="PANTHER" id="PTHR42853">
    <property type="entry name" value="ACETYL-COENZYME A CARBOXYLASE CARBOXYL TRANSFERASE SUBUNIT ALPHA"/>
    <property type="match status" value="1"/>
</dbReference>
<dbReference type="PANTHER" id="PTHR42853:SF3">
    <property type="entry name" value="ACETYL-COENZYME A CARBOXYLASE CARBOXYL TRANSFERASE SUBUNIT ALPHA, CHLOROPLASTIC"/>
    <property type="match status" value="1"/>
</dbReference>
<dbReference type="Pfam" id="PF03255">
    <property type="entry name" value="ACCA"/>
    <property type="match status" value="1"/>
</dbReference>
<dbReference type="PRINTS" id="PR01069">
    <property type="entry name" value="ACCCTRFRASEA"/>
</dbReference>
<dbReference type="SUPFAM" id="SSF52096">
    <property type="entry name" value="ClpP/crotonase"/>
    <property type="match status" value="1"/>
</dbReference>
<dbReference type="PROSITE" id="PS50989">
    <property type="entry name" value="COA_CT_CTER"/>
    <property type="match status" value="1"/>
</dbReference>
<organism>
    <name type="scientific">Pseudoalteromonas atlantica (strain T6c / ATCC BAA-1087)</name>
    <dbReference type="NCBI Taxonomy" id="3042615"/>
    <lineage>
        <taxon>Bacteria</taxon>
        <taxon>Pseudomonadati</taxon>
        <taxon>Pseudomonadota</taxon>
        <taxon>Gammaproteobacteria</taxon>
        <taxon>Alteromonadales</taxon>
        <taxon>Alteromonadaceae</taxon>
        <taxon>Paraglaciecola</taxon>
    </lineage>
</organism>
<proteinExistence type="inferred from homology"/>